<organism>
    <name type="scientific">Thermomicrobium roseum (strain ATCC 27502 / DSM 5159 / P-2)</name>
    <dbReference type="NCBI Taxonomy" id="309801"/>
    <lineage>
        <taxon>Bacteria</taxon>
        <taxon>Pseudomonadati</taxon>
        <taxon>Thermomicrobiota</taxon>
        <taxon>Thermomicrobia</taxon>
        <taxon>Thermomicrobiales</taxon>
        <taxon>Thermomicrobiaceae</taxon>
        <taxon>Thermomicrobium</taxon>
    </lineage>
</organism>
<reference key="1">
    <citation type="journal article" date="2009" name="PLoS ONE">
        <title>Complete genome sequence of the aerobic CO-oxidizing thermophile Thermomicrobium roseum.</title>
        <authorList>
            <person name="Wu D."/>
            <person name="Raymond J."/>
            <person name="Wu M."/>
            <person name="Chatterji S."/>
            <person name="Ren Q."/>
            <person name="Graham J.E."/>
            <person name="Bryant D.A."/>
            <person name="Robb F."/>
            <person name="Colman A."/>
            <person name="Tallon L.J."/>
            <person name="Badger J.H."/>
            <person name="Madupu R."/>
            <person name="Ward N.L."/>
            <person name="Eisen J.A."/>
        </authorList>
    </citation>
    <scope>NUCLEOTIDE SEQUENCE [LARGE SCALE GENOMIC DNA]</scope>
    <source>
        <strain>ATCC 27502 / DSM 5159 / P-2</strain>
    </source>
</reference>
<proteinExistence type="inferred from homology"/>
<feature type="chain" id="PRO_1000123597" description="Thymidylate kinase">
    <location>
        <begin position="1"/>
        <end position="210"/>
    </location>
</feature>
<feature type="binding site" evidence="1">
    <location>
        <begin position="9"/>
        <end position="16"/>
    </location>
    <ligand>
        <name>ATP</name>
        <dbReference type="ChEBI" id="CHEBI:30616"/>
    </ligand>
</feature>
<accession>B9KXL4</accession>
<sequence>MSWFITFEGPEGAGKTTQCALLAARLREAGYSLLVTREPGGTPLGETIREWLLAGEALRPETEALLFTAARAEHVWDRIRPALERGTIVLCDRYVDSTLAYQGAGRGLDEGWLRELHRIATGDLWPDLTILLDVPVEVGLARRRAAAATITRLDQEELAFHRRVRAWYHAAAQRDPQRWRVVDATLPPEVVADAVWATVTEVMKRGRRSP</sequence>
<comment type="function">
    <text evidence="1">Phosphorylation of dTMP to form dTDP in both de novo and salvage pathways of dTTP synthesis.</text>
</comment>
<comment type="catalytic activity">
    <reaction evidence="1">
        <text>dTMP + ATP = dTDP + ADP</text>
        <dbReference type="Rhea" id="RHEA:13517"/>
        <dbReference type="ChEBI" id="CHEBI:30616"/>
        <dbReference type="ChEBI" id="CHEBI:58369"/>
        <dbReference type="ChEBI" id="CHEBI:63528"/>
        <dbReference type="ChEBI" id="CHEBI:456216"/>
        <dbReference type="EC" id="2.7.4.9"/>
    </reaction>
</comment>
<comment type="similarity">
    <text evidence="1">Belongs to the thymidylate kinase family.</text>
</comment>
<keyword id="KW-0067">ATP-binding</keyword>
<keyword id="KW-0418">Kinase</keyword>
<keyword id="KW-0545">Nucleotide biosynthesis</keyword>
<keyword id="KW-0547">Nucleotide-binding</keyword>
<keyword id="KW-1185">Reference proteome</keyword>
<keyword id="KW-0808">Transferase</keyword>
<protein>
    <recommendedName>
        <fullName evidence="1">Thymidylate kinase</fullName>
        <ecNumber evidence="1">2.7.4.9</ecNumber>
    </recommendedName>
    <alternativeName>
        <fullName evidence="1">dTMP kinase</fullName>
    </alternativeName>
</protein>
<evidence type="ECO:0000255" key="1">
    <source>
        <dbReference type="HAMAP-Rule" id="MF_00165"/>
    </source>
</evidence>
<gene>
    <name evidence="1" type="primary">tmk</name>
    <name type="ordered locus">trd_0201</name>
</gene>
<dbReference type="EC" id="2.7.4.9" evidence="1"/>
<dbReference type="EMBL" id="CP001275">
    <property type="protein sequence ID" value="ACM04782.1"/>
    <property type="molecule type" value="Genomic_DNA"/>
</dbReference>
<dbReference type="RefSeq" id="WP_012641614.1">
    <property type="nucleotide sequence ID" value="NC_011959.1"/>
</dbReference>
<dbReference type="SMR" id="B9KXL4"/>
<dbReference type="STRING" id="309801.trd_0201"/>
<dbReference type="KEGG" id="tro:trd_0201"/>
<dbReference type="eggNOG" id="COG0125">
    <property type="taxonomic scope" value="Bacteria"/>
</dbReference>
<dbReference type="HOGENOM" id="CLU_049131_0_2_0"/>
<dbReference type="OrthoDB" id="9774907at2"/>
<dbReference type="Proteomes" id="UP000000447">
    <property type="component" value="Chromosome"/>
</dbReference>
<dbReference type="GO" id="GO:0005829">
    <property type="term" value="C:cytosol"/>
    <property type="evidence" value="ECO:0007669"/>
    <property type="project" value="TreeGrafter"/>
</dbReference>
<dbReference type="GO" id="GO:0005524">
    <property type="term" value="F:ATP binding"/>
    <property type="evidence" value="ECO:0007669"/>
    <property type="project" value="UniProtKB-UniRule"/>
</dbReference>
<dbReference type="GO" id="GO:0004798">
    <property type="term" value="F:dTMP kinase activity"/>
    <property type="evidence" value="ECO:0007669"/>
    <property type="project" value="UniProtKB-UniRule"/>
</dbReference>
<dbReference type="GO" id="GO:0006233">
    <property type="term" value="P:dTDP biosynthetic process"/>
    <property type="evidence" value="ECO:0007669"/>
    <property type="project" value="InterPro"/>
</dbReference>
<dbReference type="GO" id="GO:0006235">
    <property type="term" value="P:dTTP biosynthetic process"/>
    <property type="evidence" value="ECO:0007669"/>
    <property type="project" value="UniProtKB-UniRule"/>
</dbReference>
<dbReference type="GO" id="GO:0006227">
    <property type="term" value="P:dUDP biosynthetic process"/>
    <property type="evidence" value="ECO:0007669"/>
    <property type="project" value="TreeGrafter"/>
</dbReference>
<dbReference type="CDD" id="cd01672">
    <property type="entry name" value="TMPK"/>
    <property type="match status" value="1"/>
</dbReference>
<dbReference type="FunFam" id="3.40.50.300:FF:000225">
    <property type="entry name" value="Thymidylate kinase"/>
    <property type="match status" value="1"/>
</dbReference>
<dbReference type="Gene3D" id="3.40.50.300">
    <property type="entry name" value="P-loop containing nucleotide triphosphate hydrolases"/>
    <property type="match status" value="1"/>
</dbReference>
<dbReference type="HAMAP" id="MF_00165">
    <property type="entry name" value="Thymidylate_kinase"/>
    <property type="match status" value="1"/>
</dbReference>
<dbReference type="InterPro" id="IPR027417">
    <property type="entry name" value="P-loop_NTPase"/>
</dbReference>
<dbReference type="InterPro" id="IPR039430">
    <property type="entry name" value="Thymidylate_kin-like_dom"/>
</dbReference>
<dbReference type="InterPro" id="IPR018095">
    <property type="entry name" value="Thymidylate_kin_CS"/>
</dbReference>
<dbReference type="InterPro" id="IPR018094">
    <property type="entry name" value="Thymidylate_kinase"/>
</dbReference>
<dbReference type="NCBIfam" id="TIGR00041">
    <property type="entry name" value="DTMP_kinase"/>
    <property type="match status" value="1"/>
</dbReference>
<dbReference type="PANTHER" id="PTHR10344">
    <property type="entry name" value="THYMIDYLATE KINASE"/>
    <property type="match status" value="1"/>
</dbReference>
<dbReference type="PANTHER" id="PTHR10344:SF4">
    <property type="entry name" value="UMP-CMP KINASE 2, MITOCHONDRIAL"/>
    <property type="match status" value="1"/>
</dbReference>
<dbReference type="Pfam" id="PF02223">
    <property type="entry name" value="Thymidylate_kin"/>
    <property type="match status" value="1"/>
</dbReference>
<dbReference type="SUPFAM" id="SSF52540">
    <property type="entry name" value="P-loop containing nucleoside triphosphate hydrolases"/>
    <property type="match status" value="1"/>
</dbReference>
<dbReference type="PROSITE" id="PS01331">
    <property type="entry name" value="THYMIDYLATE_KINASE"/>
    <property type="match status" value="1"/>
</dbReference>
<name>KTHY_THERP</name>